<accession>A9BCP1</accession>
<evidence type="ECO:0000255" key="1">
    <source>
        <dbReference type="HAMAP-Rule" id="MF_01309"/>
    </source>
</evidence>
<evidence type="ECO:0000256" key="2">
    <source>
        <dbReference type="SAM" id="MobiDB-lite"/>
    </source>
</evidence>
<evidence type="ECO:0000305" key="3"/>
<reference key="1">
    <citation type="journal article" date="2007" name="PLoS Genet.">
        <title>Patterns and implications of gene gain and loss in the evolution of Prochlorococcus.</title>
        <authorList>
            <person name="Kettler G.C."/>
            <person name="Martiny A.C."/>
            <person name="Huang K."/>
            <person name="Zucker J."/>
            <person name="Coleman M.L."/>
            <person name="Rodrigue S."/>
            <person name="Chen F."/>
            <person name="Lapidus A."/>
            <person name="Ferriera S."/>
            <person name="Johnson J."/>
            <person name="Steglich C."/>
            <person name="Church G.M."/>
            <person name="Richardson P."/>
            <person name="Chisholm S.W."/>
        </authorList>
    </citation>
    <scope>NUCLEOTIDE SEQUENCE [LARGE SCALE GENOMIC DNA]</scope>
    <source>
        <strain>MIT 9211</strain>
    </source>
</reference>
<organism>
    <name type="scientific">Prochlorococcus marinus (strain MIT 9211)</name>
    <dbReference type="NCBI Taxonomy" id="93059"/>
    <lineage>
        <taxon>Bacteria</taxon>
        <taxon>Bacillati</taxon>
        <taxon>Cyanobacteriota</taxon>
        <taxon>Cyanophyceae</taxon>
        <taxon>Synechococcales</taxon>
        <taxon>Prochlorococcaceae</taxon>
        <taxon>Prochlorococcus</taxon>
    </lineage>
</organism>
<sequence>MGHKIHPNGLRLGITQEHRSRWYASSKTYPTLLQEDDRIRGFIQKKYASAGISDVLIARKADQLEVELKTARPGVIVGRQGSGIEELRSGIQKTIGDRSRQVRINVVEIERVDADAHLLAEYIAQQLEKRVAFRRTIRMAVQRAQRAGVLGLKIQVGGRLNGAEIARSEWTREGRVPLHTLRAEIDYANKTANTTYGVLGIKVWVFKGEVLSKEDQPLPVGASPRRKGSRRPQQFEDRSNDGK</sequence>
<keyword id="KW-1185">Reference proteome</keyword>
<keyword id="KW-0687">Ribonucleoprotein</keyword>
<keyword id="KW-0689">Ribosomal protein</keyword>
<keyword id="KW-0694">RNA-binding</keyword>
<keyword id="KW-0699">rRNA-binding</keyword>
<proteinExistence type="inferred from homology"/>
<protein>
    <recommendedName>
        <fullName evidence="1">Small ribosomal subunit protein uS3</fullName>
    </recommendedName>
    <alternativeName>
        <fullName evidence="3">30S ribosomal protein S3</fullName>
    </alternativeName>
</protein>
<dbReference type="EMBL" id="CP000878">
    <property type="protein sequence ID" value="ABX09603.1"/>
    <property type="molecule type" value="Genomic_DNA"/>
</dbReference>
<dbReference type="RefSeq" id="WP_012196223.1">
    <property type="nucleotide sequence ID" value="NC_009976.1"/>
</dbReference>
<dbReference type="SMR" id="A9BCP1"/>
<dbReference type="STRING" id="93059.P9211_16721"/>
<dbReference type="KEGG" id="pmj:P9211_16721"/>
<dbReference type="eggNOG" id="COG0092">
    <property type="taxonomic scope" value="Bacteria"/>
</dbReference>
<dbReference type="HOGENOM" id="CLU_058591_0_2_3"/>
<dbReference type="OrthoDB" id="9806396at2"/>
<dbReference type="Proteomes" id="UP000000788">
    <property type="component" value="Chromosome"/>
</dbReference>
<dbReference type="GO" id="GO:0022627">
    <property type="term" value="C:cytosolic small ribosomal subunit"/>
    <property type="evidence" value="ECO:0007669"/>
    <property type="project" value="TreeGrafter"/>
</dbReference>
<dbReference type="GO" id="GO:0003729">
    <property type="term" value="F:mRNA binding"/>
    <property type="evidence" value="ECO:0007669"/>
    <property type="project" value="UniProtKB-UniRule"/>
</dbReference>
<dbReference type="GO" id="GO:0019843">
    <property type="term" value="F:rRNA binding"/>
    <property type="evidence" value="ECO:0007669"/>
    <property type="project" value="UniProtKB-UniRule"/>
</dbReference>
<dbReference type="GO" id="GO:0003735">
    <property type="term" value="F:structural constituent of ribosome"/>
    <property type="evidence" value="ECO:0007669"/>
    <property type="project" value="InterPro"/>
</dbReference>
<dbReference type="GO" id="GO:0006412">
    <property type="term" value="P:translation"/>
    <property type="evidence" value="ECO:0007669"/>
    <property type="project" value="UniProtKB-UniRule"/>
</dbReference>
<dbReference type="CDD" id="cd02412">
    <property type="entry name" value="KH-II_30S_S3"/>
    <property type="match status" value="1"/>
</dbReference>
<dbReference type="FunFam" id="3.30.300.20:FF:000001">
    <property type="entry name" value="30S ribosomal protein S3"/>
    <property type="match status" value="1"/>
</dbReference>
<dbReference type="Gene3D" id="3.30.300.20">
    <property type="match status" value="1"/>
</dbReference>
<dbReference type="Gene3D" id="3.30.1140.32">
    <property type="entry name" value="Ribosomal protein S3, C-terminal domain"/>
    <property type="match status" value="1"/>
</dbReference>
<dbReference type="HAMAP" id="MF_01309_B">
    <property type="entry name" value="Ribosomal_uS3_B"/>
    <property type="match status" value="1"/>
</dbReference>
<dbReference type="InterPro" id="IPR004087">
    <property type="entry name" value="KH_dom"/>
</dbReference>
<dbReference type="InterPro" id="IPR015946">
    <property type="entry name" value="KH_dom-like_a/b"/>
</dbReference>
<dbReference type="InterPro" id="IPR004044">
    <property type="entry name" value="KH_dom_type_2"/>
</dbReference>
<dbReference type="InterPro" id="IPR009019">
    <property type="entry name" value="KH_sf_prok-type"/>
</dbReference>
<dbReference type="InterPro" id="IPR036419">
    <property type="entry name" value="Ribosomal_S3_C_sf"/>
</dbReference>
<dbReference type="InterPro" id="IPR005704">
    <property type="entry name" value="Ribosomal_uS3_bac-typ"/>
</dbReference>
<dbReference type="InterPro" id="IPR001351">
    <property type="entry name" value="Ribosomal_uS3_C"/>
</dbReference>
<dbReference type="InterPro" id="IPR018280">
    <property type="entry name" value="Ribosomal_uS3_CS"/>
</dbReference>
<dbReference type="NCBIfam" id="TIGR01009">
    <property type="entry name" value="rpsC_bact"/>
    <property type="match status" value="1"/>
</dbReference>
<dbReference type="PANTHER" id="PTHR11760">
    <property type="entry name" value="30S/40S RIBOSOMAL PROTEIN S3"/>
    <property type="match status" value="1"/>
</dbReference>
<dbReference type="PANTHER" id="PTHR11760:SF19">
    <property type="entry name" value="SMALL RIBOSOMAL SUBUNIT PROTEIN US3C"/>
    <property type="match status" value="1"/>
</dbReference>
<dbReference type="Pfam" id="PF07650">
    <property type="entry name" value="KH_2"/>
    <property type="match status" value="1"/>
</dbReference>
<dbReference type="Pfam" id="PF00189">
    <property type="entry name" value="Ribosomal_S3_C"/>
    <property type="match status" value="1"/>
</dbReference>
<dbReference type="SMART" id="SM00322">
    <property type="entry name" value="KH"/>
    <property type="match status" value="1"/>
</dbReference>
<dbReference type="SUPFAM" id="SSF54814">
    <property type="entry name" value="Prokaryotic type KH domain (KH-domain type II)"/>
    <property type="match status" value="1"/>
</dbReference>
<dbReference type="SUPFAM" id="SSF54821">
    <property type="entry name" value="Ribosomal protein S3 C-terminal domain"/>
    <property type="match status" value="1"/>
</dbReference>
<dbReference type="PROSITE" id="PS50823">
    <property type="entry name" value="KH_TYPE_2"/>
    <property type="match status" value="1"/>
</dbReference>
<dbReference type="PROSITE" id="PS00548">
    <property type="entry name" value="RIBOSOMAL_S3"/>
    <property type="match status" value="1"/>
</dbReference>
<name>RS3_PROM4</name>
<feature type="chain" id="PRO_1000141004" description="Small ribosomal subunit protein uS3">
    <location>
        <begin position="1"/>
        <end position="243"/>
    </location>
</feature>
<feature type="domain" description="KH type-2" evidence="1">
    <location>
        <begin position="39"/>
        <end position="110"/>
    </location>
</feature>
<feature type="region of interest" description="Disordered" evidence="2">
    <location>
        <begin position="215"/>
        <end position="243"/>
    </location>
</feature>
<feature type="compositionally biased region" description="Basic and acidic residues" evidence="2">
    <location>
        <begin position="233"/>
        <end position="243"/>
    </location>
</feature>
<comment type="function">
    <text evidence="1">Binds the lower part of the 30S subunit head. Binds mRNA in the 70S ribosome, positioning it for translation.</text>
</comment>
<comment type="subunit">
    <text evidence="1">Part of the 30S ribosomal subunit. Forms a tight complex with proteins S10 and S14.</text>
</comment>
<comment type="similarity">
    <text evidence="1">Belongs to the universal ribosomal protein uS3 family.</text>
</comment>
<gene>
    <name evidence="1" type="primary">rpsC</name>
    <name evidence="1" type="synonym">rps3</name>
    <name type="ordered locus">P9211_16721</name>
</gene>